<protein>
    <recommendedName>
        <fullName>E3 ubiquitin-protein ligase Topors</fullName>
        <ecNumber>2.3.2.27</ecNumber>
    </recommendedName>
    <alternativeName>
        <fullName evidence="6">RING-type E3 ubiquitin transferase Topors</fullName>
    </alternativeName>
    <alternativeName>
        <fullName>SUMO1-protein E3 ligase Topors</fullName>
    </alternativeName>
    <alternativeName>
        <fullName>Topoisomerase I-binding RING finger protein</fullName>
    </alternativeName>
    <alternativeName>
        <fullName>Topoisomerase I-binding arginine/serine-rich protein</fullName>
    </alternativeName>
    <alternativeName>
        <fullName>dTopors</fullName>
    </alternativeName>
</protein>
<name>TOPRS_DROME</name>
<accession>Q9V8P9</accession>
<dbReference type="EC" id="2.3.2.27"/>
<dbReference type="EMBL" id="AE013599">
    <property type="protein sequence ID" value="AAF57614.1"/>
    <property type="molecule type" value="Genomic_DNA"/>
</dbReference>
<dbReference type="EMBL" id="AY122186">
    <property type="protein sequence ID" value="AAM52698.1"/>
    <property type="molecule type" value="mRNA"/>
</dbReference>
<dbReference type="RefSeq" id="NP_001261083.1">
    <property type="nucleotide sequence ID" value="NM_001274154.1"/>
</dbReference>
<dbReference type="RefSeq" id="NP_611388.1">
    <property type="nucleotide sequence ID" value="NM_137544.3"/>
</dbReference>
<dbReference type="SMR" id="Q9V8P9"/>
<dbReference type="BioGRID" id="62854">
    <property type="interactions" value="11"/>
</dbReference>
<dbReference type="FunCoup" id="Q9V8P9">
    <property type="interactions" value="7"/>
</dbReference>
<dbReference type="IntAct" id="Q9V8P9">
    <property type="interactions" value="4"/>
</dbReference>
<dbReference type="STRING" id="7227.FBpp0304302"/>
<dbReference type="iPTMnet" id="Q9V8P9"/>
<dbReference type="PaxDb" id="7227-FBpp0304302"/>
<dbReference type="EnsemblMetazoa" id="FBtr0086570">
    <property type="protein sequence ID" value="FBpp0085754"/>
    <property type="gene ID" value="FBgn0267351"/>
</dbReference>
<dbReference type="EnsemblMetazoa" id="FBtr0331977">
    <property type="protein sequence ID" value="FBpp0304302"/>
    <property type="gene ID" value="FBgn0267351"/>
</dbReference>
<dbReference type="GeneID" id="37188"/>
<dbReference type="KEGG" id="dme:Dmel_CG15104"/>
<dbReference type="AGR" id="FB:FBgn0267351"/>
<dbReference type="CTD" id="10210"/>
<dbReference type="FlyBase" id="FBgn0267351">
    <property type="gene designation" value="Topors"/>
</dbReference>
<dbReference type="VEuPathDB" id="VectorBase:FBgn0267351"/>
<dbReference type="eggNOG" id="KOG4430">
    <property type="taxonomic scope" value="Eukaryota"/>
</dbReference>
<dbReference type="GeneTree" id="ENSGT00530000064170"/>
<dbReference type="HOGENOM" id="CLU_009654_0_0_1"/>
<dbReference type="InParanoid" id="Q9V8P9"/>
<dbReference type="OMA" id="RRPRYMP"/>
<dbReference type="OrthoDB" id="365379at2759"/>
<dbReference type="PhylomeDB" id="Q9V8P9"/>
<dbReference type="SignaLink" id="Q9V8P9"/>
<dbReference type="BioGRID-ORCS" id="37188">
    <property type="hits" value="0 hits in 1 CRISPR screen"/>
</dbReference>
<dbReference type="ChiTaRS" id="Topors">
    <property type="organism name" value="fly"/>
</dbReference>
<dbReference type="GenomeRNAi" id="37188"/>
<dbReference type="PRO" id="PR:Q9V8P9"/>
<dbReference type="Proteomes" id="UP000000803">
    <property type="component" value="Chromosome 2R"/>
</dbReference>
<dbReference type="Bgee" id="FBgn0267351">
    <property type="expression patterns" value="Expressed in egg cell and 82 other cell types or tissues"/>
</dbReference>
<dbReference type="ExpressionAtlas" id="Q9V8P9">
    <property type="expression patterns" value="baseline and differential"/>
</dbReference>
<dbReference type="GO" id="GO:0005652">
    <property type="term" value="C:nuclear lamina"/>
    <property type="evidence" value="ECO:0000314"/>
    <property type="project" value="UniProtKB"/>
</dbReference>
<dbReference type="GO" id="GO:0005634">
    <property type="term" value="C:nucleus"/>
    <property type="evidence" value="ECO:0000314"/>
    <property type="project" value="FlyBase"/>
</dbReference>
<dbReference type="GO" id="GO:0005700">
    <property type="term" value="C:polytene chromosome"/>
    <property type="evidence" value="ECO:0000314"/>
    <property type="project" value="UniProtKB"/>
</dbReference>
<dbReference type="GO" id="GO:0005521">
    <property type="term" value="F:lamin binding"/>
    <property type="evidence" value="ECO:0000314"/>
    <property type="project" value="UniProtKB"/>
</dbReference>
<dbReference type="GO" id="GO:0019789">
    <property type="term" value="F:SUMO transferase activity"/>
    <property type="evidence" value="ECO:0000250"/>
    <property type="project" value="FlyBase"/>
</dbReference>
<dbReference type="GO" id="GO:0061630">
    <property type="term" value="F:ubiquitin protein ligase activity"/>
    <property type="evidence" value="ECO:0000314"/>
    <property type="project" value="FlyBase"/>
</dbReference>
<dbReference type="GO" id="GO:0008270">
    <property type="term" value="F:zinc ion binding"/>
    <property type="evidence" value="ECO:0000255"/>
    <property type="project" value="FlyBase"/>
</dbReference>
<dbReference type="GO" id="GO:0051299">
    <property type="term" value="P:centrosome separation"/>
    <property type="evidence" value="ECO:0000315"/>
    <property type="project" value="FlyBase"/>
</dbReference>
<dbReference type="GO" id="GO:0006325">
    <property type="term" value="P:chromatin organization"/>
    <property type="evidence" value="ECO:0007669"/>
    <property type="project" value="UniProtKB-KW"/>
</dbReference>
<dbReference type="GO" id="GO:0007060">
    <property type="term" value="P:male meiosis chromosome segregation"/>
    <property type="evidence" value="ECO:0000315"/>
    <property type="project" value="FlyBase"/>
</dbReference>
<dbReference type="GO" id="GO:0010032">
    <property type="term" value="P:meiotic chromosome condensation"/>
    <property type="evidence" value="ECO:0000315"/>
    <property type="project" value="FlyBase"/>
</dbReference>
<dbReference type="GO" id="GO:0071763">
    <property type="term" value="P:nuclear membrane organization"/>
    <property type="evidence" value="ECO:0000315"/>
    <property type="project" value="FlyBase"/>
</dbReference>
<dbReference type="GO" id="GO:0006997">
    <property type="term" value="P:nucleus organization"/>
    <property type="evidence" value="ECO:0000315"/>
    <property type="project" value="UniProtKB"/>
</dbReference>
<dbReference type="GO" id="GO:0006513">
    <property type="term" value="P:protein monoubiquitination"/>
    <property type="evidence" value="ECO:0000318"/>
    <property type="project" value="GO_Central"/>
</dbReference>
<dbReference type="GO" id="GO:0000209">
    <property type="term" value="P:protein polyubiquitination"/>
    <property type="evidence" value="ECO:0000314"/>
    <property type="project" value="UniProtKB"/>
</dbReference>
<dbReference type="GO" id="GO:0006355">
    <property type="term" value="P:regulation of DNA-templated transcription"/>
    <property type="evidence" value="ECO:0000316"/>
    <property type="project" value="UniProtKB"/>
</dbReference>
<dbReference type="GO" id="GO:0006511">
    <property type="term" value="P:ubiquitin-dependent protein catabolic process"/>
    <property type="evidence" value="ECO:0000314"/>
    <property type="project" value="UniProtKB"/>
</dbReference>
<dbReference type="CDD" id="cd16574">
    <property type="entry name" value="RING-HC_Topors"/>
    <property type="match status" value="1"/>
</dbReference>
<dbReference type="FunFam" id="3.30.40.10:FF:000136">
    <property type="entry name" value="E3 ubiquitin-protein ligase Topors"/>
    <property type="match status" value="1"/>
</dbReference>
<dbReference type="Gene3D" id="3.30.40.10">
    <property type="entry name" value="Zinc/RING finger domain, C3HC4 (zinc finger)"/>
    <property type="match status" value="1"/>
</dbReference>
<dbReference type="InterPro" id="IPR018957">
    <property type="entry name" value="Znf_C3HC4_RING-type"/>
</dbReference>
<dbReference type="InterPro" id="IPR001841">
    <property type="entry name" value="Znf_RING"/>
</dbReference>
<dbReference type="InterPro" id="IPR013083">
    <property type="entry name" value="Znf_RING/FYVE/PHD"/>
</dbReference>
<dbReference type="InterPro" id="IPR017907">
    <property type="entry name" value="Znf_RING_CS"/>
</dbReference>
<dbReference type="PANTHER" id="PTHR46077">
    <property type="entry name" value="E3 UBIQUITIN-PROTEIN LIGASE TOPORS"/>
    <property type="match status" value="1"/>
</dbReference>
<dbReference type="PANTHER" id="PTHR46077:SF1">
    <property type="entry name" value="TOP1 BINDING ARGININE_SERINE RICH PROTEIN, E3 UBIQUITIN LIGASE"/>
    <property type="match status" value="1"/>
</dbReference>
<dbReference type="Pfam" id="PF00097">
    <property type="entry name" value="zf-C3HC4"/>
    <property type="match status" value="1"/>
</dbReference>
<dbReference type="SMART" id="SM00184">
    <property type="entry name" value="RING"/>
    <property type="match status" value="1"/>
</dbReference>
<dbReference type="SUPFAM" id="SSF57850">
    <property type="entry name" value="RING/U-box"/>
    <property type="match status" value="1"/>
</dbReference>
<dbReference type="PROSITE" id="PS00518">
    <property type="entry name" value="ZF_RING_1"/>
    <property type="match status" value="1"/>
</dbReference>
<dbReference type="PROSITE" id="PS50089">
    <property type="entry name" value="ZF_RING_2"/>
    <property type="match status" value="1"/>
</dbReference>
<gene>
    <name type="primary">Topors</name>
    <name type="ORF">CG15104</name>
</gene>
<feature type="chain" id="PRO_0000232628" description="E3 ubiquitin-protein ligase Topors">
    <location>
        <begin position="1"/>
        <end position="1038"/>
    </location>
</feature>
<feature type="zinc finger region" description="RING-type" evidence="1">
    <location>
        <begin position="102"/>
        <end position="141"/>
    </location>
</feature>
<feature type="region of interest" description="Disordered" evidence="2">
    <location>
        <begin position="53"/>
        <end position="96"/>
    </location>
</feature>
<feature type="region of interest" description="Interaction with hairy/hry">
    <location>
        <begin position="495"/>
        <end position="682"/>
    </location>
</feature>
<feature type="region of interest" description="Disordered" evidence="2">
    <location>
        <begin position="627"/>
        <end position="858"/>
    </location>
</feature>
<feature type="region of interest" description="Disordered" evidence="2">
    <location>
        <begin position="972"/>
        <end position="1038"/>
    </location>
</feature>
<feature type="compositionally biased region" description="Basic residues" evidence="2">
    <location>
        <begin position="633"/>
        <end position="642"/>
    </location>
</feature>
<feature type="compositionally biased region" description="Low complexity" evidence="2">
    <location>
        <begin position="643"/>
        <end position="668"/>
    </location>
</feature>
<feature type="compositionally biased region" description="Basic residues" evidence="2">
    <location>
        <begin position="686"/>
        <end position="699"/>
    </location>
</feature>
<feature type="compositionally biased region" description="Low complexity" evidence="2">
    <location>
        <begin position="723"/>
        <end position="744"/>
    </location>
</feature>
<feature type="compositionally biased region" description="Basic and acidic residues" evidence="2">
    <location>
        <begin position="792"/>
        <end position="801"/>
    </location>
</feature>
<feature type="compositionally biased region" description="Low complexity" evidence="2">
    <location>
        <begin position="841"/>
        <end position="858"/>
    </location>
</feature>
<feature type="compositionally biased region" description="Acidic residues" evidence="2">
    <location>
        <begin position="987"/>
        <end position="1031"/>
    </location>
</feature>
<feature type="modified residue" description="Phosphothreonine" evidence="5">
    <location>
        <position position="820"/>
    </location>
</feature>
<feature type="modified residue" description="Phosphoserine" evidence="5">
    <location>
        <position position="822"/>
    </location>
</feature>
<feature type="mutagenesis site" description="Abrogates ubiquitin-protein E3 ligase activity." evidence="3">
    <original>C</original>
    <variation>A</variation>
    <location>
        <position position="102"/>
    </location>
</feature>
<feature type="mutagenesis site" description="Abrogates enhancement of gypsy chromatin insulator activity." evidence="4">
    <original>C</original>
    <variation>S</variation>
    <location>
        <position position="118"/>
    </location>
</feature>
<reference key="1">
    <citation type="journal article" date="2000" name="Science">
        <title>The genome sequence of Drosophila melanogaster.</title>
        <authorList>
            <person name="Adams M.D."/>
            <person name="Celniker S.E."/>
            <person name="Holt R.A."/>
            <person name="Evans C.A."/>
            <person name="Gocayne J.D."/>
            <person name="Amanatides P.G."/>
            <person name="Scherer S.E."/>
            <person name="Li P.W."/>
            <person name="Hoskins R.A."/>
            <person name="Galle R.F."/>
            <person name="George R.A."/>
            <person name="Lewis S.E."/>
            <person name="Richards S."/>
            <person name="Ashburner M."/>
            <person name="Henderson S.N."/>
            <person name="Sutton G.G."/>
            <person name="Wortman J.R."/>
            <person name="Yandell M.D."/>
            <person name="Zhang Q."/>
            <person name="Chen L.X."/>
            <person name="Brandon R.C."/>
            <person name="Rogers Y.-H.C."/>
            <person name="Blazej R.G."/>
            <person name="Champe M."/>
            <person name="Pfeiffer B.D."/>
            <person name="Wan K.H."/>
            <person name="Doyle C."/>
            <person name="Baxter E.G."/>
            <person name="Helt G."/>
            <person name="Nelson C.R."/>
            <person name="Miklos G.L.G."/>
            <person name="Abril J.F."/>
            <person name="Agbayani A."/>
            <person name="An H.-J."/>
            <person name="Andrews-Pfannkoch C."/>
            <person name="Baldwin D."/>
            <person name="Ballew R.M."/>
            <person name="Basu A."/>
            <person name="Baxendale J."/>
            <person name="Bayraktaroglu L."/>
            <person name="Beasley E.M."/>
            <person name="Beeson K.Y."/>
            <person name="Benos P.V."/>
            <person name="Berman B.P."/>
            <person name="Bhandari D."/>
            <person name="Bolshakov S."/>
            <person name="Borkova D."/>
            <person name="Botchan M.R."/>
            <person name="Bouck J."/>
            <person name="Brokstein P."/>
            <person name="Brottier P."/>
            <person name="Burtis K.C."/>
            <person name="Busam D.A."/>
            <person name="Butler H."/>
            <person name="Cadieu E."/>
            <person name="Center A."/>
            <person name="Chandra I."/>
            <person name="Cherry J.M."/>
            <person name="Cawley S."/>
            <person name="Dahlke C."/>
            <person name="Davenport L.B."/>
            <person name="Davies P."/>
            <person name="de Pablos B."/>
            <person name="Delcher A."/>
            <person name="Deng Z."/>
            <person name="Mays A.D."/>
            <person name="Dew I."/>
            <person name="Dietz S.M."/>
            <person name="Dodson K."/>
            <person name="Doup L.E."/>
            <person name="Downes M."/>
            <person name="Dugan-Rocha S."/>
            <person name="Dunkov B.C."/>
            <person name="Dunn P."/>
            <person name="Durbin K.J."/>
            <person name="Evangelista C.C."/>
            <person name="Ferraz C."/>
            <person name="Ferriera S."/>
            <person name="Fleischmann W."/>
            <person name="Fosler C."/>
            <person name="Gabrielian A.E."/>
            <person name="Garg N.S."/>
            <person name="Gelbart W.M."/>
            <person name="Glasser K."/>
            <person name="Glodek A."/>
            <person name="Gong F."/>
            <person name="Gorrell J.H."/>
            <person name="Gu Z."/>
            <person name="Guan P."/>
            <person name="Harris M."/>
            <person name="Harris N.L."/>
            <person name="Harvey D.A."/>
            <person name="Heiman T.J."/>
            <person name="Hernandez J.R."/>
            <person name="Houck J."/>
            <person name="Hostin D."/>
            <person name="Houston K.A."/>
            <person name="Howland T.J."/>
            <person name="Wei M.-H."/>
            <person name="Ibegwam C."/>
            <person name="Jalali M."/>
            <person name="Kalush F."/>
            <person name="Karpen G.H."/>
            <person name="Ke Z."/>
            <person name="Kennison J.A."/>
            <person name="Ketchum K.A."/>
            <person name="Kimmel B.E."/>
            <person name="Kodira C.D."/>
            <person name="Kraft C.L."/>
            <person name="Kravitz S."/>
            <person name="Kulp D."/>
            <person name="Lai Z."/>
            <person name="Lasko P."/>
            <person name="Lei Y."/>
            <person name="Levitsky A.A."/>
            <person name="Li J.H."/>
            <person name="Li Z."/>
            <person name="Liang Y."/>
            <person name="Lin X."/>
            <person name="Liu X."/>
            <person name="Mattei B."/>
            <person name="McIntosh T.C."/>
            <person name="McLeod M.P."/>
            <person name="McPherson D."/>
            <person name="Merkulov G."/>
            <person name="Milshina N.V."/>
            <person name="Mobarry C."/>
            <person name="Morris J."/>
            <person name="Moshrefi A."/>
            <person name="Mount S.M."/>
            <person name="Moy M."/>
            <person name="Murphy B."/>
            <person name="Murphy L."/>
            <person name="Muzny D.M."/>
            <person name="Nelson D.L."/>
            <person name="Nelson D.R."/>
            <person name="Nelson K.A."/>
            <person name="Nixon K."/>
            <person name="Nusskern D.R."/>
            <person name="Pacleb J.M."/>
            <person name="Palazzolo M."/>
            <person name="Pittman G.S."/>
            <person name="Pan S."/>
            <person name="Pollard J."/>
            <person name="Puri V."/>
            <person name="Reese M.G."/>
            <person name="Reinert K."/>
            <person name="Remington K."/>
            <person name="Saunders R.D.C."/>
            <person name="Scheeler F."/>
            <person name="Shen H."/>
            <person name="Shue B.C."/>
            <person name="Siden-Kiamos I."/>
            <person name="Simpson M."/>
            <person name="Skupski M.P."/>
            <person name="Smith T.J."/>
            <person name="Spier E."/>
            <person name="Spradling A.C."/>
            <person name="Stapleton M."/>
            <person name="Strong R."/>
            <person name="Sun E."/>
            <person name="Svirskas R."/>
            <person name="Tector C."/>
            <person name="Turner R."/>
            <person name="Venter E."/>
            <person name="Wang A.H."/>
            <person name="Wang X."/>
            <person name="Wang Z.-Y."/>
            <person name="Wassarman D.A."/>
            <person name="Weinstock G.M."/>
            <person name="Weissenbach J."/>
            <person name="Williams S.M."/>
            <person name="Woodage T."/>
            <person name="Worley K.C."/>
            <person name="Wu D."/>
            <person name="Yang S."/>
            <person name="Yao Q.A."/>
            <person name="Ye J."/>
            <person name="Yeh R.-F."/>
            <person name="Zaveri J.S."/>
            <person name="Zhan M."/>
            <person name="Zhang G."/>
            <person name="Zhao Q."/>
            <person name="Zheng L."/>
            <person name="Zheng X.H."/>
            <person name="Zhong F.N."/>
            <person name="Zhong W."/>
            <person name="Zhou X."/>
            <person name="Zhu S.C."/>
            <person name="Zhu X."/>
            <person name="Smith H.O."/>
            <person name="Gibbs R.A."/>
            <person name="Myers E.W."/>
            <person name="Rubin G.M."/>
            <person name="Venter J.C."/>
        </authorList>
    </citation>
    <scope>NUCLEOTIDE SEQUENCE [LARGE SCALE GENOMIC DNA]</scope>
    <source>
        <strain>Berkeley</strain>
    </source>
</reference>
<reference key="2">
    <citation type="journal article" date="2002" name="Genome Biol.">
        <title>Annotation of the Drosophila melanogaster euchromatic genome: a systematic review.</title>
        <authorList>
            <person name="Misra S."/>
            <person name="Crosby M.A."/>
            <person name="Mungall C.J."/>
            <person name="Matthews B.B."/>
            <person name="Campbell K.S."/>
            <person name="Hradecky P."/>
            <person name="Huang Y."/>
            <person name="Kaminker J.S."/>
            <person name="Millburn G.H."/>
            <person name="Prochnik S.E."/>
            <person name="Smith C.D."/>
            <person name="Tupy J.L."/>
            <person name="Whitfield E.J."/>
            <person name="Bayraktaroglu L."/>
            <person name="Berman B.P."/>
            <person name="Bettencourt B.R."/>
            <person name="Celniker S.E."/>
            <person name="de Grey A.D.N.J."/>
            <person name="Drysdale R.A."/>
            <person name="Harris N.L."/>
            <person name="Richter J."/>
            <person name="Russo S."/>
            <person name="Schroeder A.J."/>
            <person name="Shu S.Q."/>
            <person name="Stapleton M."/>
            <person name="Yamada C."/>
            <person name="Ashburner M."/>
            <person name="Gelbart W.M."/>
            <person name="Rubin G.M."/>
            <person name="Lewis S.E."/>
        </authorList>
    </citation>
    <scope>GENOME REANNOTATION</scope>
    <source>
        <strain>Berkeley</strain>
    </source>
</reference>
<reference key="3">
    <citation type="journal article" date="2002" name="Genome Biol.">
        <title>A Drosophila full-length cDNA resource.</title>
        <authorList>
            <person name="Stapleton M."/>
            <person name="Carlson J.W."/>
            <person name="Brokstein P."/>
            <person name="Yu C."/>
            <person name="Champe M."/>
            <person name="George R.A."/>
            <person name="Guarin H."/>
            <person name="Kronmiller B."/>
            <person name="Pacleb J.M."/>
            <person name="Park S."/>
            <person name="Wan K.H."/>
            <person name="Rubin G.M."/>
            <person name="Celniker S.E."/>
        </authorList>
    </citation>
    <scope>NUCLEOTIDE SEQUENCE [LARGE SCALE MRNA]</scope>
    <source>
        <strain>Berkeley</strain>
        <tissue>Embryo</tissue>
    </source>
</reference>
<reference key="4">
    <citation type="journal article" date="2004" name="J. Biol. Chem.">
        <title>Drosophila Topors is a RING finger-containing protein that functions as a ubiquitin-protein isopeptide ligase for the hairy basic helix-loop-helix repressor protein.</title>
        <authorList>
            <person name="Secombe J."/>
            <person name="Parkhurst S.M."/>
        </authorList>
    </citation>
    <scope>FUNCTION</scope>
    <scope>INTERACTION WITH H; P53 AND TOP1</scope>
    <scope>MUTAGENESIS OF CYS-102</scope>
</reference>
<reference key="5">
    <citation type="journal article" date="2005" name="Mol. Cell">
        <title>The ubiquitin ligase dTopors directs the nuclear organization of a chromatin insulator.</title>
        <authorList>
            <person name="Capelson M."/>
            <person name="Corces V.G."/>
        </authorList>
    </citation>
    <scope>FUNCTION</scope>
    <scope>INTERACTION WITH CP190; LAM; MOD(MDG4) AND SU(HW)</scope>
    <scope>SUBCELLULAR LOCATION</scope>
    <scope>MUTAGENESIS OF CYS-118</scope>
</reference>
<reference key="6">
    <citation type="journal article" date="2008" name="J. Proteome Res.">
        <title>Phosphoproteome analysis of Drosophila melanogaster embryos.</title>
        <authorList>
            <person name="Zhai B."/>
            <person name="Villen J."/>
            <person name="Beausoleil S.A."/>
            <person name="Mintseris J."/>
            <person name="Gygi S.P."/>
        </authorList>
    </citation>
    <scope>PHOSPHORYLATION [LARGE SCALE ANALYSIS] AT THR-820 AND SER-822</scope>
    <scope>IDENTIFICATION BY MASS SPECTROMETRY</scope>
    <source>
        <tissue>Embryo</tissue>
    </source>
</reference>
<organism>
    <name type="scientific">Drosophila melanogaster</name>
    <name type="common">Fruit fly</name>
    <dbReference type="NCBI Taxonomy" id="7227"/>
    <lineage>
        <taxon>Eukaryota</taxon>
        <taxon>Metazoa</taxon>
        <taxon>Ecdysozoa</taxon>
        <taxon>Arthropoda</taxon>
        <taxon>Hexapoda</taxon>
        <taxon>Insecta</taxon>
        <taxon>Pterygota</taxon>
        <taxon>Neoptera</taxon>
        <taxon>Endopterygota</taxon>
        <taxon>Diptera</taxon>
        <taxon>Brachycera</taxon>
        <taxon>Muscomorpha</taxon>
        <taxon>Ephydroidea</taxon>
        <taxon>Drosophilidae</taxon>
        <taxon>Drosophila</taxon>
        <taxon>Sophophora</taxon>
    </lineage>
</organism>
<proteinExistence type="evidence at protein level"/>
<sequence>MAEENPGALAANVPYLGVDELGASVIVEPGLEGSNAGGRTLPAAAIKFADLTESGSESGDNEAEEPVSAGPDNANAIGEPGTSASAAEENGTVERNSPPPNCAICLSRCRRKCFTDSCMHQFCFKCLCEWSKIKPECPLCKQPFRTIIHNVRTLDDYDRYPVQTTSPVPTENPSLRYHIVRRPRYTPLVQNQAVIVNDIEAAIAAGAAGEDVLSAAEVAAGRRSYSRFEPYRSELMNYYQHDQDASTSGSLSQLWRRYVYDRKLYALPVSDSVTGHFREWSARFYRNNPAQIHRLMPWIHRDIMCLLRNAAHSVNTVMTLMSDLLPMTSLLGPTFRRRLSPYLGERTSHFIHELFNFARSPYDINGYDHVVQYSARVAEEVEVDLLDMVETQSSNGDDLNLEVGDSDADAINAGFSPDWSPPRVRPSTSVIVTNPGATHSFSVTMASDGSELPGISIRRTTNVGSQTVAINLSMRRPAAVASEEPEVIEIDDGDAAANAEVAAINDGSNTSRRHAGATLPVTAHIELESSSSSGDEDECVFVLELKPPHMRTPEQVSLDSNSDSDVVFVNEQHEAAPDAIAENRSTQSPLDLASRDQGLFMGPSTSGAAANRGKNWKLVMAQTRRLDQLRTLRSIRSKKSRRSSMPARSDSGSSPSSCSSSSFHFSSSSDEDSSDSSTTNSEPPKKKSRKRVANNKRSKKESIGKRTSRKRKAKDQNMEMLEQQQISQKKPQRQPESSSDSPSSSDDESGGDSSESSGQPNTNNNKSSSDSDDDSAVNMQLSALRATLKAEATLEDRKPVKLELQLPDDDQAGPLHSRMTPSPREDNEPGCSAPKRRRSCSHSNQSSQSASLASSSTATSSSAPLSSFAWGAAGFSGDPLMRGHPAMEEHDIANSLIELSTLTQPVNIGLFNEHYNSAENSMGMLSNTLCDSPQTLAADDANLENYFDTDADPEASRERDAYSLEAAIDVVGESELQIAEDTATATEEQDEEDEEDEDQEEDDQEEEKAAEEEEEEEEDDDDSDNHDENDENQGLLPY</sequence>
<keyword id="KW-0156">Chromatin regulator</keyword>
<keyword id="KW-0158">Chromosome</keyword>
<keyword id="KW-0479">Metal-binding</keyword>
<keyword id="KW-0539">Nucleus</keyword>
<keyword id="KW-0597">Phosphoprotein</keyword>
<keyword id="KW-1185">Reference proteome</keyword>
<keyword id="KW-0804">Transcription</keyword>
<keyword id="KW-0805">Transcription regulation</keyword>
<keyword id="KW-0808">Transferase</keyword>
<keyword id="KW-0833">Ubl conjugation pathway</keyword>
<keyword id="KW-0862">Zinc</keyword>
<keyword id="KW-0863">Zinc-finger</keyword>
<evidence type="ECO:0000255" key="1">
    <source>
        <dbReference type="PROSITE-ProRule" id="PRU00175"/>
    </source>
</evidence>
<evidence type="ECO:0000256" key="2">
    <source>
        <dbReference type="SAM" id="MobiDB-lite"/>
    </source>
</evidence>
<evidence type="ECO:0000269" key="3">
    <source>
    </source>
</evidence>
<evidence type="ECO:0000269" key="4">
    <source>
    </source>
</evidence>
<evidence type="ECO:0000269" key="5">
    <source>
    </source>
</evidence>
<evidence type="ECO:0000305" key="6"/>
<comment type="function">
    <text evidence="3 4">Functions as a ubiquitin-protein E3 ligase. Negatively regulates the transcriptional repressor hairy/hry by promoting its ubiquitination and subsequent degradation. Also directs the nuclear organization of the gypsy chromatin insulator. Chromatin insulators are regulatory elements which establish independent domains of transcriptional activity within eukaryotic genomes. Insulators have two defining properties; they can block the communication between an enhancer and a promoter when placed between them, and can also buffer transgenes from position effect variegation (PEV). Insulators are proposed to structure the chromatin fiber into independent domains of differing transcriptional potential by promoting the formation of distinct chromatin loops. This chromatin looping may require the formation of insulator bodies, where homotypic interactions between individual subunits of the insulator complex could promote the clustering of widely spaced insulators at the nuclear periphery. Within the gypsy insulator complex, this protein may promote formation of nuclear insulator bodies by recruiting individual insulator complexes to the nuclear lamina.</text>
</comment>
<comment type="catalytic activity">
    <reaction>
        <text>S-ubiquitinyl-[E2 ubiquitin-conjugating enzyme]-L-cysteine + [acceptor protein]-L-lysine = [E2 ubiquitin-conjugating enzyme]-L-cysteine + N(6)-ubiquitinyl-[acceptor protein]-L-lysine.</text>
        <dbReference type="EC" id="2.3.2.27"/>
    </reaction>
</comment>
<comment type="subunit">
    <text evidence="3 4">Interacts with hairy/hry, p53 and Top1. Interacts with the gypsy chromatin insulator complex, composed of Cp190, mod(mdg4) and su(Hw); interacts directly with mod(mdg4) and su(Hw). Interacts with Lam/lamin.</text>
</comment>
<comment type="interaction">
    <interactant intactId="EBI-147805">
        <id>Q9V8P9</id>
    </interactant>
    <interactant intactId="EBI-123011">
        <id>P14003</id>
        <label>hry</label>
    </interactant>
    <organismsDiffer>false</organismsDiffer>
    <experiments>4</experiments>
</comment>
<comment type="subcellular location">
    <subcellularLocation>
        <location evidence="4">Nucleus</location>
    </subcellularLocation>
    <subcellularLocation>
        <location evidence="4">Chromosome</location>
    </subcellularLocation>
    <text>Colocalizes with the gypsy chromatin insulator complex on polytene chromosomes and to nuclear insulator bodies. Also localizes to the nuclear lamina.</text>
</comment>